<accession>Q3JY65</accession>
<sequence>MQKKIKVLCVDDSALIRSLMTEIINSQPDMEVCATAPDPLVARELIKQHNPDVLTLDVEMPRMDGLDFLEKLMRLRPMPVVMVSSLTERGSEITLRALELGAVDFVTKPRVGIRDGMLDYSEKLADKVRAASRARVRQNPQPHAAAAAAAHGHAGAAAPLINNPLVSTEKLIIVGASTGGTEAIREVLTPLPPDAPAVLIAQHMPPGFTRSFAQRLNGLCRISVKEAEHGERVLPGHAYIAPGHAHLLLARSGANYIAHLSDEPPVNRHRPSVDVLFRSAAQHAGKNALGVILTGMGRDGAAGLLEMKKAGAYTFAQDEASCVVFGMPREAIAMGGVDDVAPLSDMSRRIMARLASMGDRVQRV</sequence>
<name>CHEB1_BURP1</name>
<evidence type="ECO:0000255" key="1">
    <source>
        <dbReference type="HAMAP-Rule" id="MF_00099"/>
    </source>
</evidence>
<keyword id="KW-0145">Chemotaxis</keyword>
<keyword id="KW-0963">Cytoplasm</keyword>
<keyword id="KW-0378">Hydrolase</keyword>
<keyword id="KW-0597">Phosphoprotein</keyword>
<proteinExistence type="inferred from homology"/>
<comment type="function">
    <text evidence="1">Involved in chemotaxis. Part of a chemotaxis signal transduction system that modulates chemotaxis in response to various stimuli. Catalyzes the demethylation of specific methylglutamate residues introduced into the chemoreceptors (methyl-accepting chemotaxis proteins or MCP) by CheR. Also mediates the irreversible deamidation of specific glutamine residues to glutamic acid.</text>
</comment>
<comment type="catalytic activity">
    <reaction evidence="1">
        <text>[protein]-L-glutamate 5-O-methyl ester + H2O = L-glutamyl-[protein] + methanol + H(+)</text>
        <dbReference type="Rhea" id="RHEA:23236"/>
        <dbReference type="Rhea" id="RHEA-COMP:10208"/>
        <dbReference type="Rhea" id="RHEA-COMP:10311"/>
        <dbReference type="ChEBI" id="CHEBI:15377"/>
        <dbReference type="ChEBI" id="CHEBI:15378"/>
        <dbReference type="ChEBI" id="CHEBI:17790"/>
        <dbReference type="ChEBI" id="CHEBI:29973"/>
        <dbReference type="ChEBI" id="CHEBI:82795"/>
        <dbReference type="EC" id="3.1.1.61"/>
    </reaction>
</comment>
<comment type="catalytic activity">
    <reaction evidence="1">
        <text>L-glutaminyl-[protein] + H2O = L-glutamyl-[protein] + NH4(+)</text>
        <dbReference type="Rhea" id="RHEA:16441"/>
        <dbReference type="Rhea" id="RHEA-COMP:10207"/>
        <dbReference type="Rhea" id="RHEA-COMP:10208"/>
        <dbReference type="ChEBI" id="CHEBI:15377"/>
        <dbReference type="ChEBI" id="CHEBI:28938"/>
        <dbReference type="ChEBI" id="CHEBI:29973"/>
        <dbReference type="ChEBI" id="CHEBI:30011"/>
        <dbReference type="EC" id="3.5.1.44"/>
    </reaction>
</comment>
<comment type="subcellular location">
    <subcellularLocation>
        <location evidence="1">Cytoplasm</location>
    </subcellularLocation>
</comment>
<comment type="domain">
    <text evidence="1">Contains a C-terminal catalytic domain, and an N-terminal region which modulates catalytic activity.</text>
</comment>
<comment type="PTM">
    <text evidence="1">Phosphorylated by CheA. Phosphorylation of the N-terminal regulatory domain activates the methylesterase activity.</text>
</comment>
<comment type="similarity">
    <text evidence="1">Belongs to the CheB family.</text>
</comment>
<dbReference type="EC" id="3.1.1.61" evidence="1"/>
<dbReference type="EC" id="3.5.1.44" evidence="1"/>
<dbReference type="EMBL" id="CP000124">
    <property type="protein sequence ID" value="ABA48480.1"/>
    <property type="molecule type" value="Genomic_DNA"/>
</dbReference>
<dbReference type="RefSeq" id="WP_004198645.1">
    <property type="nucleotide sequence ID" value="NC_007434.1"/>
</dbReference>
<dbReference type="SMR" id="Q3JY65"/>
<dbReference type="EnsemblBacteria" id="ABA48480">
    <property type="protein sequence ID" value="ABA48480"/>
    <property type="gene ID" value="BURPS1710b_0071"/>
</dbReference>
<dbReference type="KEGG" id="bpm:BURPS1710b_0071"/>
<dbReference type="HOGENOM" id="CLU_000445_51_0_4"/>
<dbReference type="Proteomes" id="UP000002700">
    <property type="component" value="Chromosome I"/>
</dbReference>
<dbReference type="GO" id="GO:0005737">
    <property type="term" value="C:cytoplasm"/>
    <property type="evidence" value="ECO:0007669"/>
    <property type="project" value="UniProtKB-SubCell"/>
</dbReference>
<dbReference type="GO" id="GO:0000156">
    <property type="term" value="F:phosphorelay response regulator activity"/>
    <property type="evidence" value="ECO:0007669"/>
    <property type="project" value="InterPro"/>
</dbReference>
<dbReference type="GO" id="GO:0008984">
    <property type="term" value="F:protein-glutamate methylesterase activity"/>
    <property type="evidence" value="ECO:0007669"/>
    <property type="project" value="UniProtKB-UniRule"/>
</dbReference>
<dbReference type="GO" id="GO:0050568">
    <property type="term" value="F:protein-glutamine glutaminase activity"/>
    <property type="evidence" value="ECO:0007669"/>
    <property type="project" value="UniProtKB-UniRule"/>
</dbReference>
<dbReference type="GO" id="GO:0006935">
    <property type="term" value="P:chemotaxis"/>
    <property type="evidence" value="ECO:0007669"/>
    <property type="project" value="UniProtKB-UniRule"/>
</dbReference>
<dbReference type="CDD" id="cd16432">
    <property type="entry name" value="CheB_Rec"/>
    <property type="match status" value="1"/>
</dbReference>
<dbReference type="CDD" id="cd17541">
    <property type="entry name" value="REC_CheB-like"/>
    <property type="match status" value="1"/>
</dbReference>
<dbReference type="FunFam" id="3.40.50.180:FF:000001">
    <property type="entry name" value="Protein-glutamate methylesterase/protein-glutamine glutaminase"/>
    <property type="match status" value="1"/>
</dbReference>
<dbReference type="FunFam" id="3.40.50.2300:FF:000060">
    <property type="entry name" value="Protein-glutamate methylesterase/protein-glutamine glutaminase"/>
    <property type="match status" value="1"/>
</dbReference>
<dbReference type="Gene3D" id="3.40.50.2300">
    <property type="match status" value="1"/>
</dbReference>
<dbReference type="Gene3D" id="3.40.50.180">
    <property type="entry name" value="Methylesterase CheB, C-terminal domain"/>
    <property type="match status" value="1"/>
</dbReference>
<dbReference type="HAMAP" id="MF_00099">
    <property type="entry name" value="CheB_chemtxs"/>
    <property type="match status" value="1"/>
</dbReference>
<dbReference type="InterPro" id="IPR008248">
    <property type="entry name" value="CheB-like"/>
</dbReference>
<dbReference type="InterPro" id="IPR035909">
    <property type="entry name" value="CheB_C"/>
</dbReference>
<dbReference type="InterPro" id="IPR011006">
    <property type="entry name" value="CheY-like_superfamily"/>
</dbReference>
<dbReference type="InterPro" id="IPR000673">
    <property type="entry name" value="Sig_transdc_resp-reg_Me-estase"/>
</dbReference>
<dbReference type="InterPro" id="IPR001789">
    <property type="entry name" value="Sig_transdc_resp-reg_receiver"/>
</dbReference>
<dbReference type="NCBIfam" id="NF001965">
    <property type="entry name" value="PRK00742.1"/>
    <property type="match status" value="1"/>
</dbReference>
<dbReference type="NCBIfam" id="NF009206">
    <property type="entry name" value="PRK12555.1"/>
    <property type="match status" value="1"/>
</dbReference>
<dbReference type="PANTHER" id="PTHR42872">
    <property type="entry name" value="PROTEIN-GLUTAMATE METHYLESTERASE/PROTEIN-GLUTAMINE GLUTAMINASE"/>
    <property type="match status" value="1"/>
</dbReference>
<dbReference type="PANTHER" id="PTHR42872:SF6">
    <property type="entry name" value="PROTEIN-GLUTAMATE METHYLESTERASE_PROTEIN-GLUTAMINE GLUTAMINASE"/>
    <property type="match status" value="1"/>
</dbReference>
<dbReference type="Pfam" id="PF01339">
    <property type="entry name" value="CheB_methylest"/>
    <property type="match status" value="1"/>
</dbReference>
<dbReference type="Pfam" id="PF00072">
    <property type="entry name" value="Response_reg"/>
    <property type="match status" value="1"/>
</dbReference>
<dbReference type="PIRSF" id="PIRSF000876">
    <property type="entry name" value="RR_chemtxs_CheB"/>
    <property type="match status" value="1"/>
</dbReference>
<dbReference type="SMART" id="SM00448">
    <property type="entry name" value="REC"/>
    <property type="match status" value="1"/>
</dbReference>
<dbReference type="SUPFAM" id="SSF52172">
    <property type="entry name" value="CheY-like"/>
    <property type="match status" value="1"/>
</dbReference>
<dbReference type="SUPFAM" id="SSF52738">
    <property type="entry name" value="Methylesterase CheB, C-terminal domain"/>
    <property type="match status" value="1"/>
</dbReference>
<dbReference type="PROSITE" id="PS50122">
    <property type="entry name" value="CHEB"/>
    <property type="match status" value="1"/>
</dbReference>
<dbReference type="PROSITE" id="PS50110">
    <property type="entry name" value="RESPONSE_REGULATORY"/>
    <property type="match status" value="1"/>
</dbReference>
<gene>
    <name evidence="1" type="primary">cheB1</name>
    <name type="ordered locus">BURPS1710b_0071</name>
</gene>
<organism>
    <name type="scientific">Burkholderia pseudomallei (strain 1710b)</name>
    <dbReference type="NCBI Taxonomy" id="320372"/>
    <lineage>
        <taxon>Bacteria</taxon>
        <taxon>Pseudomonadati</taxon>
        <taxon>Pseudomonadota</taxon>
        <taxon>Betaproteobacteria</taxon>
        <taxon>Burkholderiales</taxon>
        <taxon>Burkholderiaceae</taxon>
        <taxon>Burkholderia</taxon>
        <taxon>pseudomallei group</taxon>
    </lineage>
</organism>
<protein>
    <recommendedName>
        <fullName evidence="1">Protein-glutamate methylesterase/protein-glutamine glutaminase 1</fullName>
        <ecNumber evidence="1">3.1.1.61</ecNumber>
        <ecNumber evidence="1">3.5.1.44</ecNumber>
    </recommendedName>
</protein>
<feature type="chain" id="PRO_0000225447" description="Protein-glutamate methylesterase/protein-glutamine glutaminase 1">
    <location>
        <begin position="1"/>
        <end position="364"/>
    </location>
</feature>
<feature type="domain" description="Response regulatory" evidence="1">
    <location>
        <begin position="6"/>
        <end position="123"/>
    </location>
</feature>
<feature type="domain" description="CheB-type methylesterase" evidence="1">
    <location>
        <begin position="165"/>
        <end position="357"/>
    </location>
</feature>
<feature type="active site" evidence="1">
    <location>
        <position position="177"/>
    </location>
</feature>
<feature type="active site" evidence="1">
    <location>
        <position position="203"/>
    </location>
</feature>
<feature type="active site" evidence="1">
    <location>
        <position position="299"/>
    </location>
</feature>
<feature type="modified residue" description="4-aspartylphosphate" evidence="1">
    <location>
        <position position="57"/>
    </location>
</feature>
<reference key="1">
    <citation type="journal article" date="2010" name="Genome Biol. Evol.">
        <title>Continuing evolution of Burkholderia mallei through genome reduction and large-scale rearrangements.</title>
        <authorList>
            <person name="Losada L."/>
            <person name="Ronning C.M."/>
            <person name="DeShazer D."/>
            <person name="Woods D."/>
            <person name="Fedorova N."/>
            <person name="Kim H.S."/>
            <person name="Shabalina S.A."/>
            <person name="Pearson T.R."/>
            <person name="Brinkac L."/>
            <person name="Tan P."/>
            <person name="Nandi T."/>
            <person name="Crabtree J."/>
            <person name="Badger J."/>
            <person name="Beckstrom-Sternberg S."/>
            <person name="Saqib M."/>
            <person name="Schutzer S.E."/>
            <person name="Keim P."/>
            <person name="Nierman W.C."/>
        </authorList>
    </citation>
    <scope>NUCLEOTIDE SEQUENCE [LARGE SCALE GENOMIC DNA]</scope>
    <source>
        <strain>1710b</strain>
    </source>
</reference>